<protein>
    <recommendedName>
        <fullName>Gag-Pol polyprotein</fullName>
    </recommendedName>
    <alternativeName>
        <fullName>Pr160Gag-Pol</fullName>
    </alternativeName>
    <component>
        <recommendedName>
            <fullName>Matrix protein p17</fullName>
            <shortName>MA</shortName>
        </recommendedName>
    </component>
    <component>
        <recommendedName>
            <fullName>Capsid protein p24</fullName>
            <shortName>CA</shortName>
        </recommendedName>
    </component>
    <component>
        <recommendedName>
            <fullName evidence="8">Spacer peptide 1</fullName>
            <shortName>SP1</shortName>
        </recommendedName>
        <alternativeName>
            <fullName>p2</fullName>
        </alternativeName>
    </component>
    <component>
        <recommendedName>
            <fullName>Nucleocapsid protein p7</fullName>
            <shortName>NC</shortName>
        </recommendedName>
    </component>
    <component>
        <recommendedName>
            <fullName>Transframe peptide</fullName>
            <shortName>TF</shortName>
        </recommendedName>
    </component>
    <component>
        <recommendedName>
            <fullName>p6-pol</fullName>
            <shortName>p6*</shortName>
        </recommendedName>
    </component>
    <component>
        <recommendedName>
            <fullName>Protease</fullName>
            <ecNumber>3.4.23.47</ecNumber>
        </recommendedName>
        <alternativeName>
            <fullName>PR</fullName>
        </alternativeName>
        <alternativeName>
            <fullName>Retropepsin</fullName>
        </alternativeName>
    </component>
    <component>
        <recommendedName>
            <fullName>Reverse transcriptase/ribonuclease H</fullName>
            <ecNumber>2.7.7.49</ecNumber>
            <ecNumber>2.7.7.7</ecNumber>
            <ecNumber>3.1.26.13</ecNumber>
        </recommendedName>
        <alternativeName>
            <fullName>Exoribonuclease H</fullName>
            <ecNumber>3.1.13.2</ecNumber>
        </alternativeName>
        <alternativeName>
            <fullName>p66 RT</fullName>
        </alternativeName>
    </component>
    <component>
        <recommendedName>
            <fullName>p51 RT</fullName>
        </recommendedName>
    </component>
    <component>
        <recommendedName>
            <fullName>p15</fullName>
        </recommendedName>
    </component>
    <component>
        <recommendedName>
            <fullName>Integrase</fullName>
            <shortName>IN</shortName>
            <ecNumber evidence="5">2.7.7.-</ecNumber>
            <ecNumber evidence="5">3.1.-.-</ecNumber>
        </recommendedName>
    </component>
</protein>
<feature type="initiator methionine" description="Removed; by host" evidence="1">
    <location>
        <position position="1"/>
    </location>
</feature>
<feature type="chain" id="PRO_0000261298" description="Gag-Pol polyprotein">
    <location>
        <begin position="2"/>
        <end position="1464"/>
    </location>
</feature>
<feature type="chain" id="PRO_0000042537" description="Matrix protein p17" evidence="1">
    <location>
        <begin position="2"/>
        <end position="135"/>
    </location>
</feature>
<feature type="chain" id="PRO_0000042538" description="Capsid protein p24" evidence="1">
    <location>
        <begin position="136"/>
        <end position="365"/>
    </location>
</feature>
<feature type="peptide" id="PRO_0000042539" description="Spacer peptide 1" evidence="1">
    <location>
        <begin position="366"/>
        <end position="382"/>
    </location>
</feature>
<feature type="chain" id="PRO_0000042541" description="Nucleocapsid protein p7" evidence="1">
    <location>
        <begin position="383"/>
        <end position="431"/>
    </location>
</feature>
<feature type="peptide" id="PRO_0000246747" description="Transframe peptide" evidence="9">
    <location>
        <begin position="432"/>
        <end position="445"/>
    </location>
</feature>
<feature type="chain" id="PRO_0000042543" description="p6-pol" evidence="9">
    <location>
        <begin position="446"/>
        <end position="513"/>
    </location>
</feature>
<feature type="chain" id="PRO_0000038674" description="Protease" evidence="1">
    <location>
        <begin position="514"/>
        <end position="612"/>
    </location>
</feature>
<feature type="chain" id="PRO_0000042544" description="Reverse transcriptase/ribonuclease H" evidence="1">
    <location>
        <begin position="613"/>
        <end position="1171"/>
    </location>
</feature>
<feature type="chain" id="PRO_0000042545" description="p51 RT" evidence="1">
    <location>
        <begin position="613"/>
        <end position="1051"/>
    </location>
</feature>
<feature type="chain" id="PRO_0000042546" description="p15" evidence="1">
    <location>
        <begin position="1052"/>
        <end position="1171"/>
    </location>
</feature>
<feature type="chain" id="PRO_0000042547" description="Integrase" evidence="1">
    <location>
        <begin position="1172"/>
        <end position="1464"/>
    </location>
</feature>
<feature type="domain" description="Peptidase A2" evidence="11">
    <location>
        <begin position="533"/>
        <end position="602"/>
    </location>
</feature>
<feature type="domain" description="Reverse transcriptase" evidence="12">
    <location>
        <begin position="656"/>
        <end position="846"/>
    </location>
</feature>
<feature type="domain" description="RNase H type-1" evidence="13">
    <location>
        <begin position="1045"/>
        <end position="1168"/>
    </location>
</feature>
<feature type="domain" description="Integrase catalytic" evidence="15">
    <location>
        <begin position="1224"/>
        <end position="1375"/>
    </location>
</feature>
<feature type="zinc finger region" description="CCHC-type 1" evidence="10">
    <location>
        <begin position="389"/>
        <end position="406"/>
    </location>
</feature>
<feature type="zinc finger region" description="CCHC-type 2" evidence="10">
    <location>
        <begin position="410"/>
        <end position="427"/>
    </location>
</feature>
<feature type="zinc finger region" description="Integrase-type" evidence="14">
    <location>
        <begin position="1174"/>
        <end position="1215"/>
    </location>
</feature>
<feature type="DNA-binding region" description="Integrase-type" evidence="16">
    <location>
        <begin position="1394"/>
        <end position="1441"/>
    </location>
</feature>
<feature type="region of interest" description="Interaction with Gp41" evidence="8">
    <location>
        <begin position="7"/>
        <end position="31"/>
    </location>
</feature>
<feature type="region of interest" description="Disordered" evidence="18">
    <location>
        <begin position="111"/>
        <end position="136"/>
    </location>
</feature>
<feature type="region of interest" description="Interaction with human PPIA/CYPA and NUP153" evidence="8">
    <location>
        <begin position="191"/>
        <end position="228"/>
    </location>
</feature>
<feature type="region of interest" description="Dimerization/Multimerization of capsid protein p24" evidence="5">
    <location>
        <begin position="279"/>
        <end position="365"/>
    </location>
</feature>
<feature type="region of interest" description="Disordered" evidence="18">
    <location>
        <begin position="432"/>
        <end position="500"/>
    </location>
</feature>
<feature type="region of interest" description="Dimerization of protease" evidence="5">
    <location>
        <begin position="514"/>
        <end position="518"/>
    </location>
</feature>
<feature type="region of interest" description="Dimerization of protease" evidence="5">
    <location>
        <begin position="562"/>
        <end position="568"/>
    </location>
</feature>
<feature type="region of interest" description="Dimerization of protease" evidence="5">
    <location>
        <begin position="601"/>
        <end position="613"/>
    </location>
</feature>
<feature type="region of interest" description="RT 'primer grip'" evidence="1">
    <location>
        <begin position="839"/>
        <end position="847"/>
    </location>
</feature>
<feature type="short sequence motif" description="Nuclear export signal" evidence="1">
    <location>
        <begin position="16"/>
        <end position="22"/>
    </location>
</feature>
<feature type="short sequence motif" description="Nuclear localization signal" evidence="1">
    <location>
        <begin position="26"/>
        <end position="32"/>
    </location>
</feature>
<feature type="short sequence motif" description="Tryptophan repeat motif" evidence="1">
    <location>
        <begin position="1009"/>
        <end position="1025"/>
    </location>
</feature>
<feature type="compositionally biased region" description="Polar residues" evidence="18">
    <location>
        <begin position="119"/>
        <end position="128"/>
    </location>
</feature>
<feature type="compositionally biased region" description="Low complexity" evidence="18">
    <location>
        <begin position="456"/>
        <end position="469"/>
    </location>
</feature>
<feature type="compositionally biased region" description="Basic and acidic residues" evidence="18">
    <location>
        <begin position="473"/>
        <end position="485"/>
    </location>
</feature>
<feature type="active site" description="For protease activity; shared with dimeric partner" evidence="17">
    <location>
        <position position="538"/>
    </location>
</feature>
<feature type="binding site" evidence="1">
    <location>
        <position position="722"/>
    </location>
    <ligand>
        <name>Mg(2+)</name>
        <dbReference type="ChEBI" id="CHEBI:18420"/>
        <label>1</label>
        <note>catalytic; for reverse transcriptase activity</note>
    </ligand>
</feature>
<feature type="binding site" evidence="1">
    <location>
        <position position="797"/>
    </location>
    <ligand>
        <name>Mg(2+)</name>
        <dbReference type="ChEBI" id="CHEBI:18420"/>
        <label>1</label>
        <note>catalytic; for reverse transcriptase activity</note>
    </ligand>
</feature>
<feature type="binding site" evidence="1">
    <location>
        <position position="798"/>
    </location>
    <ligand>
        <name>Mg(2+)</name>
        <dbReference type="ChEBI" id="CHEBI:18420"/>
        <label>1</label>
        <note>catalytic; for reverse transcriptase activity</note>
    </ligand>
</feature>
<feature type="binding site" evidence="1">
    <location>
        <position position="1054"/>
    </location>
    <ligand>
        <name>Mg(2+)</name>
        <dbReference type="ChEBI" id="CHEBI:18420"/>
        <label>2</label>
        <note>catalytic; for RNase H activity</note>
    </ligand>
</feature>
<feature type="binding site" evidence="1">
    <location>
        <position position="1089"/>
    </location>
    <ligand>
        <name>Mg(2+)</name>
        <dbReference type="ChEBI" id="CHEBI:18420"/>
        <label>2</label>
        <note>catalytic; for RNase H activity</note>
    </ligand>
</feature>
<feature type="binding site" evidence="1">
    <location>
        <position position="1109"/>
    </location>
    <ligand>
        <name>Mg(2+)</name>
        <dbReference type="ChEBI" id="CHEBI:18420"/>
        <label>2</label>
        <note>catalytic; for RNase H activity</note>
    </ligand>
</feature>
<feature type="binding site" evidence="1">
    <location>
        <position position="1160"/>
    </location>
    <ligand>
        <name>Mg(2+)</name>
        <dbReference type="ChEBI" id="CHEBI:18420"/>
        <label>2</label>
        <note>catalytic; for RNase H activity</note>
    </ligand>
</feature>
<feature type="binding site" evidence="14">
    <location>
        <position position="1183"/>
    </location>
    <ligand>
        <name>Zn(2+)</name>
        <dbReference type="ChEBI" id="CHEBI:29105"/>
    </ligand>
</feature>
<feature type="binding site" evidence="14">
    <location>
        <position position="1187"/>
    </location>
    <ligand>
        <name>Zn(2+)</name>
        <dbReference type="ChEBI" id="CHEBI:29105"/>
    </ligand>
</feature>
<feature type="binding site" evidence="14">
    <location>
        <position position="1211"/>
    </location>
    <ligand>
        <name>Zn(2+)</name>
        <dbReference type="ChEBI" id="CHEBI:29105"/>
    </ligand>
</feature>
<feature type="binding site" evidence="14">
    <location>
        <position position="1214"/>
    </location>
    <ligand>
        <name>Zn(2+)</name>
        <dbReference type="ChEBI" id="CHEBI:29105"/>
    </ligand>
</feature>
<feature type="binding site" evidence="1">
    <location>
        <position position="1235"/>
    </location>
    <ligand>
        <name>Mg(2+)</name>
        <dbReference type="ChEBI" id="CHEBI:18420"/>
        <label>3</label>
        <note>catalytic; for integrase activity</note>
    </ligand>
</feature>
<feature type="binding site" evidence="1">
    <location>
        <position position="1287"/>
    </location>
    <ligand>
        <name>Mg(2+)</name>
        <dbReference type="ChEBI" id="CHEBI:18420"/>
        <label>3</label>
        <note>catalytic; for integrase activity</note>
    </ligand>
</feature>
<feature type="binding site" evidence="5">
    <location>
        <position position="1323"/>
    </location>
    <ligand>
        <name>Mg(2+)</name>
        <dbReference type="ChEBI" id="CHEBI:18420"/>
        <label>3</label>
        <note>catalytic; for integrase activity</note>
    </ligand>
</feature>
<feature type="site" description="Cleavage; by viral protease" evidence="1">
    <location>
        <begin position="135"/>
        <end position="136"/>
    </location>
</feature>
<feature type="site" description="Cis/trans isomerization of proline peptide bond; by human PPIA/CYPA" evidence="1">
    <location>
        <begin position="222"/>
        <end position="223"/>
    </location>
</feature>
<feature type="site" description="Cleavage; by viral protease" evidence="1">
    <location>
        <begin position="365"/>
        <end position="366"/>
    </location>
</feature>
<feature type="site" description="Cleavage; by viral protease" evidence="1">
    <location>
        <begin position="382"/>
        <end position="383"/>
    </location>
</feature>
<feature type="site" description="Cleavage; by viral protease" evidence="9">
    <location>
        <begin position="431"/>
        <end position="432"/>
    </location>
</feature>
<feature type="site" description="Cleavage; by viral protease" evidence="1">
    <location>
        <begin position="445"/>
        <end position="446"/>
    </location>
</feature>
<feature type="site" description="Cleavage; by viral protease" evidence="1">
    <location>
        <begin position="513"/>
        <end position="514"/>
    </location>
</feature>
<feature type="site" description="Cleavage; by viral protease" evidence="1">
    <location>
        <begin position="612"/>
        <end position="613"/>
    </location>
</feature>
<feature type="site" description="Essential for RT p66/p51 heterodimerization" evidence="1">
    <location>
        <position position="1012"/>
    </location>
</feature>
<feature type="site" description="Essential for RT p66/p51 heterodimerization" evidence="1">
    <location>
        <position position="1025"/>
    </location>
</feature>
<feature type="site" description="Cleavage; by viral protease; partial" evidence="1">
    <location>
        <begin position="1051"/>
        <end position="1052"/>
    </location>
</feature>
<feature type="site" description="Cleavage; by viral protease" evidence="1">
    <location>
        <begin position="1171"/>
        <end position="1172"/>
    </location>
</feature>
<feature type="modified residue" description="Phosphotyrosine; by host" evidence="1">
    <location>
        <position position="135"/>
    </location>
</feature>
<feature type="lipid moiety-binding region" description="N-myristoyl glycine; by host" evidence="1">
    <location>
        <position position="2"/>
    </location>
</feature>
<feature type="strand" evidence="25">
    <location>
        <begin position="6"/>
        <end position="8"/>
    </location>
</feature>
<feature type="helix" evidence="25">
    <location>
        <begin position="10"/>
        <end position="18"/>
    </location>
</feature>
<feature type="strand" evidence="25">
    <location>
        <begin position="19"/>
        <end position="22"/>
    </location>
</feature>
<feature type="helix" evidence="25">
    <location>
        <begin position="31"/>
        <end position="44"/>
    </location>
</feature>
<feature type="helix" evidence="25">
    <location>
        <begin position="49"/>
        <end position="51"/>
    </location>
</feature>
<feature type="helix" evidence="25">
    <location>
        <begin position="54"/>
        <end position="64"/>
    </location>
</feature>
<feature type="turn" evidence="25">
    <location>
        <begin position="65"/>
        <end position="70"/>
    </location>
</feature>
<feature type="helix" evidence="25">
    <location>
        <begin position="73"/>
        <end position="90"/>
    </location>
</feature>
<feature type="helix" evidence="25">
    <location>
        <begin position="97"/>
        <end position="115"/>
    </location>
</feature>
<feature type="strand" evidence="21">
    <location>
        <begin position="515"/>
        <end position="517"/>
    </location>
</feature>
<feature type="strand" evidence="26">
    <location>
        <begin position="518"/>
        <end position="520"/>
    </location>
</feature>
<feature type="strand" evidence="26">
    <location>
        <begin position="523"/>
        <end position="528"/>
    </location>
</feature>
<feature type="strand" evidence="26">
    <location>
        <begin position="531"/>
        <end position="537"/>
    </location>
</feature>
<feature type="strand" evidence="23">
    <location>
        <begin position="541"/>
        <end position="543"/>
    </location>
</feature>
<feature type="strand" evidence="26">
    <location>
        <begin position="545"/>
        <end position="548"/>
    </location>
</feature>
<feature type="strand" evidence="26">
    <location>
        <begin position="556"/>
        <end position="562"/>
    </location>
</feature>
<feature type="strand" evidence="26">
    <location>
        <begin position="565"/>
        <end position="579"/>
    </location>
</feature>
<feature type="strand" evidence="26">
    <location>
        <begin position="582"/>
        <end position="591"/>
    </location>
</feature>
<feature type="strand" evidence="24">
    <location>
        <begin position="594"/>
        <end position="598"/>
    </location>
</feature>
<feature type="helix" evidence="26">
    <location>
        <begin position="600"/>
        <end position="606"/>
    </location>
</feature>
<feature type="strand" evidence="26">
    <location>
        <begin position="609"/>
        <end position="611"/>
    </location>
</feature>
<feature type="helix" evidence="22">
    <location>
        <begin position="640"/>
        <end position="655"/>
    </location>
</feature>
<feature type="strand" evidence="22">
    <location>
        <begin position="658"/>
        <end position="661"/>
    </location>
</feature>
<feature type="strand" evidence="22">
    <location>
        <begin position="672"/>
        <end position="674"/>
    </location>
</feature>
<feature type="strand" evidence="22">
    <location>
        <begin position="685"/>
        <end position="687"/>
    </location>
</feature>
<feature type="helix" evidence="22">
    <location>
        <begin position="690"/>
        <end position="695"/>
    </location>
</feature>
<feature type="helix" evidence="22">
    <location>
        <begin position="709"/>
        <end position="711"/>
    </location>
</feature>
<feature type="helix" evidence="22">
    <location>
        <begin position="712"/>
        <end position="714"/>
    </location>
</feature>
<feature type="strand" evidence="22">
    <location>
        <begin position="716"/>
        <end position="722"/>
    </location>
</feature>
<feature type="strand" evidence="22">
    <location>
        <begin position="724"/>
        <end position="726"/>
    </location>
</feature>
<feature type="helix" evidence="22">
    <location>
        <begin position="727"/>
        <end position="729"/>
    </location>
</feature>
<feature type="turn" evidence="22">
    <location>
        <begin position="734"/>
        <end position="736"/>
    </location>
</feature>
<feature type="helix" evidence="22">
    <location>
        <begin position="737"/>
        <end position="740"/>
    </location>
</feature>
<feature type="strand" evidence="22">
    <location>
        <begin position="742"/>
        <end position="744"/>
    </location>
</feature>
<feature type="helix" evidence="22">
    <location>
        <begin position="747"/>
        <end position="749"/>
    </location>
</feature>
<feature type="strand" evidence="22">
    <location>
        <begin position="755"/>
        <end position="760"/>
    </location>
</feature>
<feature type="helix" evidence="22">
    <location>
        <begin position="768"/>
        <end position="786"/>
    </location>
</feature>
<feature type="strand" evidence="22">
    <location>
        <begin position="790"/>
        <end position="795"/>
    </location>
</feature>
<feature type="strand" evidence="22">
    <location>
        <begin position="798"/>
        <end position="803"/>
    </location>
</feature>
<feature type="helix" evidence="22">
    <location>
        <begin position="807"/>
        <end position="823"/>
    </location>
</feature>
<feature type="strand" evidence="22">
    <location>
        <begin position="836"/>
        <end position="841"/>
    </location>
</feature>
<feature type="strand" evidence="22">
    <location>
        <begin position="844"/>
        <end position="846"/>
    </location>
</feature>
<feature type="strand" evidence="22">
    <location>
        <begin position="848"/>
        <end position="853"/>
    </location>
</feature>
<feature type="strand" evidence="22">
    <location>
        <begin position="854"/>
        <end position="856"/>
    </location>
</feature>
<feature type="helix" evidence="22">
    <location>
        <begin position="866"/>
        <end position="882"/>
    </location>
</feature>
<feature type="helix" evidence="22">
    <location>
        <begin position="889"/>
        <end position="892"/>
    </location>
</feature>
<feature type="strand" evidence="22">
    <location>
        <begin position="897"/>
        <end position="899"/>
    </location>
</feature>
<feature type="helix" evidence="22">
    <location>
        <begin position="909"/>
        <end position="922"/>
    </location>
</feature>
<feature type="strand" evidence="22">
    <location>
        <begin position="926"/>
        <end position="929"/>
    </location>
</feature>
<feature type="strand" evidence="22">
    <location>
        <begin position="938"/>
        <end position="943"/>
    </location>
</feature>
<feature type="strand" evidence="22">
    <location>
        <begin position="945"/>
        <end position="947"/>
    </location>
</feature>
<feature type="strand" evidence="22">
    <location>
        <begin position="949"/>
        <end position="955"/>
    </location>
</feature>
<feature type="strand" evidence="22">
    <location>
        <begin position="958"/>
        <end position="965"/>
    </location>
</feature>
<feature type="helix" evidence="22">
    <location>
        <begin position="975"/>
        <end position="994"/>
    </location>
</feature>
<feature type="strand" evidence="22">
    <location>
        <begin position="999"/>
        <end position="1004"/>
    </location>
</feature>
<feature type="helix" evidence="22">
    <location>
        <begin position="1006"/>
        <end position="1015"/>
    </location>
</feature>
<feature type="strand" evidence="22">
    <location>
        <begin position="1024"/>
        <end position="1027"/>
    </location>
</feature>
<feature type="helix" evidence="22">
    <location>
        <begin position="1032"/>
        <end position="1037"/>
    </location>
</feature>
<feature type="strand" evidence="22">
    <location>
        <begin position="1040"/>
        <end position="1043"/>
    </location>
</feature>
<feature type="strand" evidence="22">
    <location>
        <begin position="1049"/>
        <end position="1057"/>
    </location>
</feature>
<feature type="turn" evidence="22">
    <location>
        <begin position="1059"/>
        <end position="1061"/>
    </location>
</feature>
<feature type="strand" evidence="22">
    <location>
        <begin position="1064"/>
        <end position="1070"/>
    </location>
</feature>
<feature type="strand" evidence="22">
    <location>
        <begin position="1075"/>
        <end position="1082"/>
    </location>
</feature>
<feature type="helix" evidence="22">
    <location>
        <begin position="1085"/>
        <end position="1098"/>
    </location>
</feature>
<feature type="strand" evidence="22">
    <location>
        <begin position="1102"/>
        <end position="1109"/>
    </location>
</feature>
<feature type="helix" evidence="22">
    <location>
        <begin position="1111"/>
        <end position="1118"/>
    </location>
</feature>
<feature type="strand" evidence="22">
    <location>
        <begin position="1122"/>
        <end position="1125"/>
    </location>
</feature>
<feature type="helix" evidence="22">
    <location>
        <begin position="1127"/>
        <end position="1138"/>
    </location>
</feature>
<feature type="strand" evidence="22">
    <location>
        <begin position="1140"/>
        <end position="1146"/>
    </location>
</feature>
<feature type="strand" evidence="22">
    <location>
        <begin position="1149"/>
        <end position="1151"/>
    </location>
</feature>
<feature type="helix" evidence="22">
    <location>
        <begin position="1156"/>
        <end position="1164"/>
    </location>
</feature>
<feature type="turn" evidence="20">
    <location>
        <begin position="1173"/>
        <end position="1175"/>
    </location>
</feature>
<feature type="helix" evidence="27">
    <location>
        <begin position="1176"/>
        <end position="1186"/>
    </location>
</feature>
<feature type="helix" evidence="27">
    <location>
        <begin position="1190"/>
        <end position="1197"/>
    </location>
</feature>
<feature type="helix" evidence="27">
    <location>
        <begin position="1201"/>
        <end position="1209"/>
    </location>
</feature>
<feature type="turn" evidence="27">
    <location>
        <begin position="1212"/>
        <end position="1216"/>
    </location>
</feature>
<feature type="strand" evidence="27">
    <location>
        <begin position="1231"/>
        <end position="1239"/>
    </location>
</feature>
<feature type="strand" evidence="27">
    <location>
        <begin position="1242"/>
        <end position="1249"/>
    </location>
</feature>
<feature type="turn" evidence="27">
    <location>
        <begin position="1250"/>
        <end position="1252"/>
    </location>
</feature>
<feature type="strand" evidence="27">
    <location>
        <begin position="1255"/>
        <end position="1262"/>
    </location>
</feature>
<feature type="helix" evidence="27">
    <location>
        <begin position="1265"/>
        <end position="1276"/>
    </location>
</feature>
<feature type="strand" evidence="27">
    <location>
        <begin position="1282"/>
        <end position="1286"/>
    </location>
</feature>
<feature type="turn" evidence="27">
    <location>
        <begin position="1290"/>
        <end position="1292"/>
    </location>
</feature>
<feature type="helix" evidence="27">
    <location>
        <begin position="1295"/>
        <end position="1304"/>
    </location>
</feature>
<feature type="strand" evidence="27">
    <location>
        <begin position="1307"/>
        <end position="1312"/>
    </location>
</feature>
<feature type="helix" evidence="27">
    <location>
        <begin position="1321"/>
        <end position="1335"/>
    </location>
</feature>
<feature type="helix" evidence="27">
    <location>
        <begin position="1337"/>
        <end position="1339"/>
    </location>
</feature>
<feature type="helix" evidence="27">
    <location>
        <begin position="1343"/>
        <end position="1356"/>
    </location>
</feature>
<feature type="turn" evidence="27">
    <location>
        <begin position="1361"/>
        <end position="1364"/>
    </location>
</feature>
<feature type="helix" evidence="27">
    <location>
        <begin position="1367"/>
        <end position="1376"/>
    </location>
</feature>
<dbReference type="EC" id="3.4.23.47"/>
<dbReference type="EC" id="2.7.7.49"/>
<dbReference type="EC" id="2.7.7.7"/>
<dbReference type="EC" id="3.1.26.13"/>
<dbReference type="EC" id="3.1.13.2"/>
<dbReference type="EC" id="2.7.7.-" evidence="5"/>
<dbReference type="EC" id="3.1.-.-" evidence="5"/>
<dbReference type="EMBL" id="X05291">
    <property type="status" value="NOT_ANNOTATED_CDS"/>
    <property type="molecule type" value="Genomic_RNA"/>
</dbReference>
<dbReference type="EMBL" id="M15390">
    <property type="protein sequence ID" value="AAB00764.1"/>
    <property type="status" value="ALT_SEQ"/>
    <property type="molecule type" value="Genomic_DNA"/>
</dbReference>
<dbReference type="PIR" id="B26262">
    <property type="entry name" value="GNLJG2"/>
</dbReference>
<dbReference type="PDB" id="1E0E">
    <property type="method" value="NMR"/>
    <property type="chains" value="A/B=1172-1226"/>
</dbReference>
<dbReference type="PDB" id="1HII">
    <property type="method" value="X-ray"/>
    <property type="resolution" value="2.30 A"/>
    <property type="chains" value="A/B=514-612"/>
</dbReference>
<dbReference type="PDB" id="1HSH">
    <property type="method" value="X-ray"/>
    <property type="resolution" value="1.90 A"/>
    <property type="chains" value="A/B/C/D=514-612"/>
</dbReference>
<dbReference type="PDB" id="1HSI">
    <property type="method" value="X-ray"/>
    <property type="resolution" value="2.50 A"/>
    <property type="chains" value="A/B=514-612"/>
</dbReference>
<dbReference type="PDB" id="1IDA">
    <property type="method" value="X-ray"/>
    <property type="resolution" value="1.70 A"/>
    <property type="chains" value="A/B=514-612"/>
</dbReference>
<dbReference type="PDB" id="1IDB">
    <property type="method" value="X-ray"/>
    <property type="resolution" value="2.20 A"/>
    <property type="chains" value="A/B=514-612"/>
</dbReference>
<dbReference type="PDB" id="1IVP">
    <property type="method" value="X-ray"/>
    <property type="resolution" value="2.50 A"/>
    <property type="chains" value="A/B=514-612"/>
</dbReference>
<dbReference type="PDB" id="1IVQ">
    <property type="method" value="X-ray"/>
    <property type="resolution" value="2.60 A"/>
    <property type="chains" value="A/B=514-612"/>
</dbReference>
<dbReference type="PDB" id="1JLD">
    <property type="method" value="X-ray"/>
    <property type="resolution" value="2.50 A"/>
    <property type="chains" value="A/B=514-612"/>
</dbReference>
<dbReference type="PDB" id="1MU2">
    <property type="method" value="X-ray"/>
    <property type="resolution" value="2.35 A"/>
    <property type="chains" value="A=613-1167, B=618-1043"/>
</dbReference>
<dbReference type="PDB" id="2HPE">
    <property type="method" value="X-ray"/>
    <property type="resolution" value="2.00 A"/>
    <property type="chains" value="A/B=514-612"/>
</dbReference>
<dbReference type="PDB" id="2HPF">
    <property type="method" value="X-ray"/>
    <property type="resolution" value="3.00 A"/>
    <property type="chains" value="A/B=514-612"/>
</dbReference>
<dbReference type="PDB" id="2K4E">
    <property type="method" value="NMR"/>
    <property type="chains" value="A=2-135"/>
</dbReference>
<dbReference type="PDB" id="2K4H">
    <property type="method" value="NMR"/>
    <property type="chains" value="A=2-135"/>
</dbReference>
<dbReference type="PDB" id="2K4I">
    <property type="method" value="NMR"/>
    <property type="chains" value="A=2-135"/>
</dbReference>
<dbReference type="PDB" id="2MIP">
    <property type="method" value="X-ray"/>
    <property type="resolution" value="2.20 A"/>
    <property type="chains" value="A/B/C/D=514-612"/>
</dbReference>
<dbReference type="PDB" id="3EBZ">
    <property type="method" value="X-ray"/>
    <property type="resolution" value="1.20 A"/>
    <property type="chains" value="A/B=514-612"/>
</dbReference>
<dbReference type="PDB" id="3EC0">
    <property type="method" value="X-ray"/>
    <property type="resolution" value="1.18 A"/>
    <property type="chains" value="A/B=514-612"/>
</dbReference>
<dbReference type="PDB" id="3ECG">
    <property type="method" value="X-ray"/>
    <property type="resolution" value="1.18 A"/>
    <property type="chains" value="A/B=514-612"/>
</dbReference>
<dbReference type="PDB" id="3F9K">
    <property type="method" value="X-ray"/>
    <property type="resolution" value="3.20 A"/>
    <property type="chains" value="A/B/E/F/I/J/M/N/Q/R/U/V/Y/Z/c/d/g/h/k/l/o/p/s/t=1173-1380"/>
</dbReference>
<dbReference type="PDB" id="3UPJ">
    <property type="method" value="X-ray"/>
    <property type="resolution" value="2.50 A"/>
    <property type="chains" value="A/B=514-612"/>
</dbReference>
<dbReference type="PDB" id="4UPJ">
    <property type="method" value="X-ray"/>
    <property type="resolution" value="1.90 A"/>
    <property type="chains" value="A/B=514-612"/>
</dbReference>
<dbReference type="PDB" id="5UPJ">
    <property type="method" value="X-ray"/>
    <property type="resolution" value="2.30 A"/>
    <property type="chains" value="A/B=514-612"/>
</dbReference>
<dbReference type="PDB" id="6UPJ">
    <property type="method" value="X-ray"/>
    <property type="resolution" value="2.34 A"/>
    <property type="chains" value="A/B=514-612"/>
</dbReference>
<dbReference type="PDBsum" id="1E0E"/>
<dbReference type="PDBsum" id="1HII"/>
<dbReference type="PDBsum" id="1HSH"/>
<dbReference type="PDBsum" id="1HSI"/>
<dbReference type="PDBsum" id="1IDA"/>
<dbReference type="PDBsum" id="1IDB"/>
<dbReference type="PDBsum" id="1IVP"/>
<dbReference type="PDBsum" id="1IVQ"/>
<dbReference type="PDBsum" id="1JLD"/>
<dbReference type="PDBsum" id="1MU2"/>
<dbReference type="PDBsum" id="2HPE"/>
<dbReference type="PDBsum" id="2HPF"/>
<dbReference type="PDBsum" id="2K4E"/>
<dbReference type="PDBsum" id="2K4H"/>
<dbReference type="PDBsum" id="2K4I"/>
<dbReference type="PDBsum" id="2MIP"/>
<dbReference type="PDBsum" id="3EBZ"/>
<dbReference type="PDBsum" id="3EC0"/>
<dbReference type="PDBsum" id="3ECG"/>
<dbReference type="PDBsum" id="3F9K"/>
<dbReference type="PDBsum" id="3UPJ"/>
<dbReference type="PDBsum" id="4UPJ"/>
<dbReference type="PDBsum" id="5UPJ"/>
<dbReference type="PDBsum" id="6UPJ"/>
<dbReference type="BMRB" id="P04584"/>
<dbReference type="SMR" id="P04584"/>
<dbReference type="IntAct" id="P04584">
    <property type="interactions" value="1"/>
</dbReference>
<dbReference type="BindingDB" id="P04584"/>
<dbReference type="DrugBank" id="DB07634">
    <property type="generic name" value="(2,6-Dimethylphenoxy)acetic acid"/>
</dbReference>
<dbReference type="DrugBank" id="DB08664">
    <property type="generic name" value="({3-[1-(4-Hydroxy-2-oxo-2H-chromen-3-yl)-propyl]-phenylcarbamoyl}-methyl)-carbamic acid tert-butyl ester"/>
</dbReference>
<dbReference type="DrugBank" id="DB08286">
    <property type="generic name" value="1-Naphthoxyacetic acid"/>
</dbReference>
<dbReference type="DrugBank" id="DB08474">
    <property type="generic name" value="3-(CARBOXYAMIDE(2-CARBOXYAMIDE-2-TERTBUTYLETHYL))PENTAN"/>
</dbReference>
<dbReference type="DrugBank" id="DB04490">
    <property type="generic name" value="3-(Mercaptomethylene)Pyridine"/>
</dbReference>
<dbReference type="DrugBank" id="DB08663">
    <property type="generic name" value="4-HYDROXY-7-METHOXY-3-(1-PHENYL-PROPYL)-CHROMEN-2-ONE"/>
</dbReference>
<dbReference type="DrugBank" id="DB08686">
    <property type="generic name" value="5,6,7,8,9,10-HEXAHYDRO-4-HYDROXY-3-(1-PHENYLPROPYL)CYCLOOCTA[B]PYRAN-2-ONE"/>
</dbReference>
<dbReference type="DrugBank" id="DB07581">
    <property type="generic name" value="5-AMINO-6-CYCLOHEXYL-4-HYDROXY-2-ISOPROPYL-HEXANOIC ACID"/>
</dbReference>
<dbReference type="DrugBank" id="DB08274">
    <property type="generic name" value="6,7,8,9-TETRAHYDRO-4-HYDROXY-3-(1-PHENYLPROPYL)CYCLOHEPTA[B]PYRAN-2-ONE"/>
</dbReference>
<dbReference type="DrugBank" id="DB08231">
    <property type="generic name" value="Myristic acid"/>
</dbReference>
<dbReference type="DrugBank" id="DB08421">
    <property type="generic name" value="PIPERIDINE-2-CARBOXYLIC ACID TERT-BUTYLAMIDE"/>
</dbReference>
<dbReference type="DrugBank" id="DB02428">
    <property type="generic name" value="Quinaldic Acid"/>
</dbReference>
<dbReference type="MEROPS" id="A02.002"/>
<dbReference type="ABCD" id="P04584">
    <property type="antibodies" value="1 sequenced antibody"/>
</dbReference>
<dbReference type="BioCyc" id="MetaCyc:MONOMER-16108"/>
<dbReference type="EvolutionaryTrace" id="P04584"/>
<dbReference type="PRO" id="PR:P04584"/>
<dbReference type="Proteomes" id="UP000007426">
    <property type="component" value="Genome"/>
</dbReference>
<dbReference type="Proteomes" id="UP000246871">
    <property type="component" value="Segment"/>
</dbReference>
<dbReference type="GO" id="GO:0043657">
    <property type="term" value="C:host cell"/>
    <property type="evidence" value="ECO:0007669"/>
    <property type="project" value="GOC"/>
</dbReference>
<dbReference type="GO" id="GO:0042025">
    <property type="term" value="C:host cell nucleus"/>
    <property type="evidence" value="ECO:0007669"/>
    <property type="project" value="UniProtKB-SubCell"/>
</dbReference>
<dbReference type="GO" id="GO:0020002">
    <property type="term" value="C:host cell plasma membrane"/>
    <property type="evidence" value="ECO:0007669"/>
    <property type="project" value="UniProtKB-SubCell"/>
</dbReference>
<dbReference type="GO" id="GO:0072494">
    <property type="term" value="C:host multivesicular body"/>
    <property type="evidence" value="ECO:0007669"/>
    <property type="project" value="UniProtKB-SubCell"/>
</dbReference>
<dbReference type="GO" id="GO:0016020">
    <property type="term" value="C:membrane"/>
    <property type="evidence" value="ECO:0007669"/>
    <property type="project" value="UniProtKB-KW"/>
</dbReference>
<dbReference type="GO" id="GO:0019013">
    <property type="term" value="C:viral nucleocapsid"/>
    <property type="evidence" value="ECO:0007669"/>
    <property type="project" value="UniProtKB-KW"/>
</dbReference>
<dbReference type="GO" id="GO:0055036">
    <property type="term" value="C:virion membrane"/>
    <property type="evidence" value="ECO:0007669"/>
    <property type="project" value="UniProtKB-SubCell"/>
</dbReference>
<dbReference type="GO" id="GO:0004190">
    <property type="term" value="F:aspartic-type endopeptidase activity"/>
    <property type="evidence" value="ECO:0007669"/>
    <property type="project" value="UniProtKB-KW"/>
</dbReference>
<dbReference type="GO" id="GO:0003677">
    <property type="term" value="F:DNA binding"/>
    <property type="evidence" value="ECO:0007669"/>
    <property type="project" value="UniProtKB-KW"/>
</dbReference>
<dbReference type="GO" id="GO:0003887">
    <property type="term" value="F:DNA-directed DNA polymerase activity"/>
    <property type="evidence" value="ECO:0007669"/>
    <property type="project" value="UniProtKB-KW"/>
</dbReference>
<dbReference type="GO" id="GO:0004533">
    <property type="term" value="F:exoribonuclease H activity"/>
    <property type="evidence" value="ECO:0007669"/>
    <property type="project" value="UniProtKB-EC"/>
</dbReference>
<dbReference type="GO" id="GO:0008289">
    <property type="term" value="F:lipid binding"/>
    <property type="evidence" value="ECO:0007669"/>
    <property type="project" value="UniProtKB-KW"/>
</dbReference>
<dbReference type="GO" id="GO:0035613">
    <property type="term" value="F:RNA stem-loop binding"/>
    <property type="evidence" value="ECO:0007669"/>
    <property type="project" value="TreeGrafter"/>
</dbReference>
<dbReference type="GO" id="GO:0003964">
    <property type="term" value="F:RNA-directed DNA polymerase activity"/>
    <property type="evidence" value="ECO:0007669"/>
    <property type="project" value="UniProtKB-KW"/>
</dbReference>
<dbReference type="GO" id="GO:0004523">
    <property type="term" value="F:RNA-DNA hybrid ribonuclease activity"/>
    <property type="evidence" value="ECO:0007669"/>
    <property type="project" value="InterPro"/>
</dbReference>
<dbReference type="GO" id="GO:0005198">
    <property type="term" value="F:structural molecule activity"/>
    <property type="evidence" value="ECO:0007669"/>
    <property type="project" value="InterPro"/>
</dbReference>
<dbReference type="GO" id="GO:0008270">
    <property type="term" value="F:zinc ion binding"/>
    <property type="evidence" value="ECO:0007669"/>
    <property type="project" value="UniProtKB-KW"/>
</dbReference>
<dbReference type="GO" id="GO:0015074">
    <property type="term" value="P:DNA integration"/>
    <property type="evidence" value="ECO:0007669"/>
    <property type="project" value="UniProtKB-KW"/>
</dbReference>
<dbReference type="GO" id="GO:0006310">
    <property type="term" value="P:DNA recombination"/>
    <property type="evidence" value="ECO:0007669"/>
    <property type="project" value="UniProtKB-KW"/>
</dbReference>
<dbReference type="GO" id="GO:0075713">
    <property type="term" value="P:establishment of integrated proviral latency"/>
    <property type="evidence" value="ECO:0007669"/>
    <property type="project" value="UniProtKB-KW"/>
</dbReference>
<dbReference type="GO" id="GO:0006508">
    <property type="term" value="P:proteolysis"/>
    <property type="evidence" value="ECO:0007669"/>
    <property type="project" value="UniProtKB-KW"/>
</dbReference>
<dbReference type="GO" id="GO:0046718">
    <property type="term" value="P:symbiont entry into host cell"/>
    <property type="evidence" value="ECO:0007669"/>
    <property type="project" value="UniProtKB-KW"/>
</dbReference>
<dbReference type="GO" id="GO:0039657">
    <property type="term" value="P:symbiont-mediated suppression of host gene expression"/>
    <property type="evidence" value="ECO:0007669"/>
    <property type="project" value="UniProtKB-KW"/>
</dbReference>
<dbReference type="GO" id="GO:0044826">
    <property type="term" value="P:viral genome integration into host DNA"/>
    <property type="evidence" value="ECO:0007669"/>
    <property type="project" value="UniProtKB-KW"/>
</dbReference>
<dbReference type="GO" id="GO:0075732">
    <property type="term" value="P:viral penetration into host nucleus"/>
    <property type="evidence" value="ECO:0007669"/>
    <property type="project" value="UniProtKB-KW"/>
</dbReference>
<dbReference type="GO" id="GO:0075523">
    <property type="term" value="P:viral translational frameshifting"/>
    <property type="evidence" value="ECO:0007669"/>
    <property type="project" value="UniProtKB-KW"/>
</dbReference>
<dbReference type="CDD" id="cd05482">
    <property type="entry name" value="HIV_retropepsin_like"/>
    <property type="match status" value="1"/>
</dbReference>
<dbReference type="Gene3D" id="1.10.10.200">
    <property type="match status" value="1"/>
</dbReference>
<dbReference type="Gene3D" id="1.10.1200.30">
    <property type="match status" value="1"/>
</dbReference>
<dbReference type="Gene3D" id="3.30.70.270">
    <property type="match status" value="3"/>
</dbReference>
<dbReference type="Gene3D" id="2.40.70.10">
    <property type="entry name" value="Acid Proteases"/>
    <property type="match status" value="1"/>
</dbReference>
<dbReference type="Gene3D" id="3.10.10.10">
    <property type="entry name" value="HIV Type 1 Reverse Transcriptase, subunit A, domain 1"/>
    <property type="match status" value="1"/>
</dbReference>
<dbReference type="Gene3D" id="1.10.375.10">
    <property type="entry name" value="Human Immunodeficiency Virus Type 1 Capsid Protein"/>
    <property type="match status" value="1"/>
</dbReference>
<dbReference type="Gene3D" id="1.10.150.90">
    <property type="entry name" value="Immunodeficiency lentiviruses, gag gene matrix protein p17"/>
    <property type="match status" value="1"/>
</dbReference>
<dbReference type="Gene3D" id="2.30.30.10">
    <property type="entry name" value="Integrase, C-terminal domain superfamily, retroviral"/>
    <property type="match status" value="1"/>
</dbReference>
<dbReference type="Gene3D" id="3.30.420.10">
    <property type="entry name" value="Ribonuclease H-like superfamily/Ribonuclease H"/>
    <property type="match status" value="2"/>
</dbReference>
<dbReference type="Gene3D" id="1.20.5.760">
    <property type="entry name" value="Single helix bin"/>
    <property type="match status" value="1"/>
</dbReference>
<dbReference type="Gene3D" id="4.10.60.10">
    <property type="entry name" value="Zinc finger, CCHC-type"/>
    <property type="match status" value="1"/>
</dbReference>
<dbReference type="InterPro" id="IPR001969">
    <property type="entry name" value="Aspartic_peptidase_AS"/>
</dbReference>
<dbReference type="InterPro" id="IPR043502">
    <property type="entry name" value="DNA/RNA_pol_sf"/>
</dbReference>
<dbReference type="InterPro" id="IPR045345">
    <property type="entry name" value="Gag_p24_C"/>
</dbReference>
<dbReference type="InterPro" id="IPR017856">
    <property type="entry name" value="Integrase-like_N"/>
</dbReference>
<dbReference type="InterPro" id="IPR036862">
    <property type="entry name" value="Integrase_C_dom_sf_retrovir"/>
</dbReference>
<dbReference type="InterPro" id="IPR001037">
    <property type="entry name" value="Integrase_C_retrovir"/>
</dbReference>
<dbReference type="InterPro" id="IPR001584">
    <property type="entry name" value="Integrase_cat-core"/>
</dbReference>
<dbReference type="InterPro" id="IPR003308">
    <property type="entry name" value="Integrase_Zn-bd_dom_N"/>
</dbReference>
<dbReference type="InterPro" id="IPR000071">
    <property type="entry name" value="Lentvrl_matrix_N"/>
</dbReference>
<dbReference type="InterPro" id="IPR012344">
    <property type="entry name" value="Matrix_HIV/RSV_N"/>
</dbReference>
<dbReference type="InterPro" id="IPR001995">
    <property type="entry name" value="Peptidase_A2_cat"/>
</dbReference>
<dbReference type="InterPro" id="IPR021109">
    <property type="entry name" value="Peptidase_aspartic_dom_sf"/>
</dbReference>
<dbReference type="InterPro" id="IPR034170">
    <property type="entry name" value="Retropepsin-like_cat_dom"/>
</dbReference>
<dbReference type="InterPro" id="IPR018061">
    <property type="entry name" value="Retropepsins"/>
</dbReference>
<dbReference type="InterPro" id="IPR008916">
    <property type="entry name" value="Retrov_capsid_C"/>
</dbReference>
<dbReference type="InterPro" id="IPR008919">
    <property type="entry name" value="Retrov_capsid_N"/>
</dbReference>
<dbReference type="InterPro" id="IPR010999">
    <property type="entry name" value="Retrovr_matrix"/>
</dbReference>
<dbReference type="InterPro" id="IPR043128">
    <property type="entry name" value="Rev_trsase/Diguanyl_cyclase"/>
</dbReference>
<dbReference type="InterPro" id="IPR012337">
    <property type="entry name" value="RNaseH-like_sf"/>
</dbReference>
<dbReference type="InterPro" id="IPR002156">
    <property type="entry name" value="RNaseH_domain"/>
</dbReference>
<dbReference type="InterPro" id="IPR036397">
    <property type="entry name" value="RNaseH_sf"/>
</dbReference>
<dbReference type="InterPro" id="IPR000477">
    <property type="entry name" value="RT_dom"/>
</dbReference>
<dbReference type="InterPro" id="IPR010659">
    <property type="entry name" value="RVT_connect"/>
</dbReference>
<dbReference type="InterPro" id="IPR010661">
    <property type="entry name" value="RVT_thumb"/>
</dbReference>
<dbReference type="InterPro" id="IPR001878">
    <property type="entry name" value="Znf_CCHC"/>
</dbReference>
<dbReference type="InterPro" id="IPR036875">
    <property type="entry name" value="Znf_CCHC_sf"/>
</dbReference>
<dbReference type="PANTHER" id="PTHR41694">
    <property type="entry name" value="ENDOGENOUS RETROVIRUS GROUP K MEMBER POL PROTEIN"/>
    <property type="match status" value="1"/>
</dbReference>
<dbReference type="PANTHER" id="PTHR41694:SF3">
    <property type="entry name" value="RNA-DIRECTED DNA POLYMERASE-RELATED"/>
    <property type="match status" value="1"/>
</dbReference>
<dbReference type="Pfam" id="PF00540">
    <property type="entry name" value="Gag_p17"/>
    <property type="match status" value="1"/>
</dbReference>
<dbReference type="Pfam" id="PF00607">
    <property type="entry name" value="Gag_p24"/>
    <property type="match status" value="1"/>
</dbReference>
<dbReference type="Pfam" id="PF19317">
    <property type="entry name" value="Gag_p24_C"/>
    <property type="match status" value="1"/>
</dbReference>
<dbReference type="Pfam" id="PF00552">
    <property type="entry name" value="IN_DBD_C"/>
    <property type="match status" value="1"/>
</dbReference>
<dbReference type="Pfam" id="PF02022">
    <property type="entry name" value="Integrase_Zn"/>
    <property type="match status" value="1"/>
</dbReference>
<dbReference type="Pfam" id="PF00075">
    <property type="entry name" value="RNase_H"/>
    <property type="match status" value="1"/>
</dbReference>
<dbReference type="Pfam" id="PF00665">
    <property type="entry name" value="rve"/>
    <property type="match status" value="1"/>
</dbReference>
<dbReference type="Pfam" id="PF00077">
    <property type="entry name" value="RVP"/>
    <property type="match status" value="1"/>
</dbReference>
<dbReference type="Pfam" id="PF00078">
    <property type="entry name" value="RVT_1"/>
    <property type="match status" value="1"/>
</dbReference>
<dbReference type="Pfam" id="PF06815">
    <property type="entry name" value="RVT_connect"/>
    <property type="match status" value="1"/>
</dbReference>
<dbReference type="Pfam" id="PF06817">
    <property type="entry name" value="RVT_thumb"/>
    <property type="match status" value="1"/>
</dbReference>
<dbReference type="Pfam" id="PF00098">
    <property type="entry name" value="zf-CCHC"/>
    <property type="match status" value="2"/>
</dbReference>
<dbReference type="PRINTS" id="PR00234">
    <property type="entry name" value="HIV1MATRIX"/>
</dbReference>
<dbReference type="SMART" id="SM00343">
    <property type="entry name" value="ZnF_C2HC"/>
    <property type="match status" value="2"/>
</dbReference>
<dbReference type="SUPFAM" id="SSF50630">
    <property type="entry name" value="Acid proteases"/>
    <property type="match status" value="1"/>
</dbReference>
<dbReference type="SUPFAM" id="SSF50122">
    <property type="entry name" value="DNA-binding domain of retroviral integrase"/>
    <property type="match status" value="1"/>
</dbReference>
<dbReference type="SUPFAM" id="SSF56672">
    <property type="entry name" value="DNA/RNA polymerases"/>
    <property type="match status" value="1"/>
</dbReference>
<dbReference type="SUPFAM" id="SSF46919">
    <property type="entry name" value="N-terminal Zn binding domain of HIV integrase"/>
    <property type="match status" value="1"/>
</dbReference>
<dbReference type="SUPFAM" id="SSF47836">
    <property type="entry name" value="Retroviral matrix proteins"/>
    <property type="match status" value="1"/>
</dbReference>
<dbReference type="SUPFAM" id="SSF47353">
    <property type="entry name" value="Retrovirus capsid dimerization domain-like"/>
    <property type="match status" value="1"/>
</dbReference>
<dbReference type="SUPFAM" id="SSF47943">
    <property type="entry name" value="Retrovirus capsid protein, N-terminal core domain"/>
    <property type="match status" value="1"/>
</dbReference>
<dbReference type="SUPFAM" id="SSF57756">
    <property type="entry name" value="Retrovirus zinc finger-like domains"/>
    <property type="match status" value="1"/>
</dbReference>
<dbReference type="SUPFAM" id="SSF53098">
    <property type="entry name" value="Ribonuclease H-like"/>
    <property type="match status" value="2"/>
</dbReference>
<dbReference type="PROSITE" id="PS50175">
    <property type="entry name" value="ASP_PROT_RETROV"/>
    <property type="match status" value="1"/>
</dbReference>
<dbReference type="PROSITE" id="PS00141">
    <property type="entry name" value="ASP_PROTEASE"/>
    <property type="match status" value="1"/>
</dbReference>
<dbReference type="PROSITE" id="PS50994">
    <property type="entry name" value="INTEGRASE"/>
    <property type="match status" value="1"/>
</dbReference>
<dbReference type="PROSITE" id="PS51027">
    <property type="entry name" value="INTEGRASE_DBD"/>
    <property type="match status" value="1"/>
</dbReference>
<dbReference type="PROSITE" id="PS50879">
    <property type="entry name" value="RNASE_H_1"/>
    <property type="match status" value="1"/>
</dbReference>
<dbReference type="PROSITE" id="PS50878">
    <property type="entry name" value="RT_POL"/>
    <property type="match status" value="1"/>
</dbReference>
<dbReference type="PROSITE" id="PS50158">
    <property type="entry name" value="ZF_CCHC"/>
    <property type="match status" value="2"/>
</dbReference>
<dbReference type="PROSITE" id="PS50876">
    <property type="entry name" value="ZF_INTEGRASE"/>
    <property type="match status" value="1"/>
</dbReference>
<organismHost>
    <name type="scientific">Homo sapiens</name>
    <name type="common">Human</name>
    <dbReference type="NCBI Taxonomy" id="9606"/>
</organismHost>
<evidence type="ECO:0000250" key="1"/>
<evidence type="ECO:0000250" key="2">
    <source>
        <dbReference type="UniProtKB" id="P03348"/>
    </source>
</evidence>
<evidence type="ECO:0000250" key="3">
    <source>
        <dbReference type="UniProtKB" id="P03366"/>
    </source>
</evidence>
<evidence type="ECO:0000250" key="4">
    <source>
        <dbReference type="UniProtKB" id="P03367"/>
    </source>
</evidence>
<evidence type="ECO:0000250" key="5">
    <source>
        <dbReference type="UniProtKB" id="P04585"/>
    </source>
</evidence>
<evidence type="ECO:0000250" key="6">
    <source>
        <dbReference type="UniProtKB" id="P04591"/>
    </source>
</evidence>
<evidence type="ECO:0000250" key="7">
    <source>
        <dbReference type="UniProtKB" id="P12493"/>
    </source>
</evidence>
<evidence type="ECO:0000250" key="8">
    <source>
        <dbReference type="UniProtKB" id="P12497"/>
    </source>
</evidence>
<evidence type="ECO:0000255" key="9"/>
<evidence type="ECO:0000255" key="10">
    <source>
        <dbReference type="PROSITE-ProRule" id="PRU00047"/>
    </source>
</evidence>
<evidence type="ECO:0000255" key="11">
    <source>
        <dbReference type="PROSITE-ProRule" id="PRU00275"/>
    </source>
</evidence>
<evidence type="ECO:0000255" key="12">
    <source>
        <dbReference type="PROSITE-ProRule" id="PRU00405"/>
    </source>
</evidence>
<evidence type="ECO:0000255" key="13">
    <source>
        <dbReference type="PROSITE-ProRule" id="PRU00408"/>
    </source>
</evidence>
<evidence type="ECO:0000255" key="14">
    <source>
        <dbReference type="PROSITE-ProRule" id="PRU00450"/>
    </source>
</evidence>
<evidence type="ECO:0000255" key="15">
    <source>
        <dbReference type="PROSITE-ProRule" id="PRU00457"/>
    </source>
</evidence>
<evidence type="ECO:0000255" key="16">
    <source>
        <dbReference type="PROSITE-ProRule" id="PRU00506"/>
    </source>
</evidence>
<evidence type="ECO:0000255" key="17">
    <source>
        <dbReference type="PROSITE-ProRule" id="PRU10094"/>
    </source>
</evidence>
<evidence type="ECO:0000256" key="18">
    <source>
        <dbReference type="SAM" id="MobiDB-lite"/>
    </source>
</evidence>
<evidence type="ECO:0000305" key="19"/>
<evidence type="ECO:0007829" key="20">
    <source>
        <dbReference type="PDB" id="1E0E"/>
    </source>
</evidence>
<evidence type="ECO:0007829" key="21">
    <source>
        <dbReference type="PDB" id="1IDB"/>
    </source>
</evidence>
<evidence type="ECO:0007829" key="22">
    <source>
        <dbReference type="PDB" id="1MU2"/>
    </source>
</evidence>
<evidence type="ECO:0007829" key="23">
    <source>
        <dbReference type="PDB" id="2HPE"/>
    </source>
</evidence>
<evidence type="ECO:0007829" key="24">
    <source>
        <dbReference type="PDB" id="2HPF"/>
    </source>
</evidence>
<evidence type="ECO:0007829" key="25">
    <source>
        <dbReference type="PDB" id="2K4E"/>
    </source>
</evidence>
<evidence type="ECO:0007829" key="26">
    <source>
        <dbReference type="PDB" id="3EC0"/>
    </source>
</evidence>
<evidence type="ECO:0007829" key="27">
    <source>
        <dbReference type="PDB" id="3F9K"/>
    </source>
</evidence>
<reference key="1">
    <citation type="journal article" date="1987" name="Nature">
        <title>Genome organization and transactivation of the human immunodeficiency virus type 2.</title>
        <authorList>
            <person name="Guyader M."/>
            <person name="Emerman M."/>
            <person name="Sonigo P."/>
            <person name="Clavel F."/>
            <person name="Montagnier L."/>
            <person name="Alizon M."/>
        </authorList>
    </citation>
    <scope>NUCLEOTIDE SEQUENCE</scope>
</reference>
<reference key="2">
    <citation type="journal article" date="1996" name="Curr. Top. Microbiol. Immunol.">
        <title>Proteolytic processing and particle maturation.</title>
        <authorList>
            <person name="Vogt V.M."/>
        </authorList>
    </citation>
    <scope>REVIEW</scope>
</reference>
<reference key="3">
    <citation type="journal article" date="1999" name="J. Mol. Biol.">
        <title>Structural biology of HIV.</title>
        <authorList>
            <person name="Turner B.G."/>
            <person name="Summers M.F."/>
        </authorList>
    </citation>
    <scope>REVIEW</scope>
</reference>
<reference key="4">
    <citation type="journal article" date="2001" name="Annu. Rev. Genet.">
        <title>Mechanisms of retroviral recombination.</title>
        <authorList>
            <person name="Negroni M."/>
            <person name="Buc H."/>
        </authorList>
    </citation>
    <scope>REVIEW</scope>
</reference>
<reference key="5">
    <citation type="journal article" date="2002" name="Genome Biol.">
        <title>Retroviral proteases.</title>
        <authorList>
            <person name="Dunn B.M."/>
            <person name="Goodenow M.M."/>
            <person name="Gustchina A."/>
            <person name="Wlodawer A."/>
        </authorList>
    </citation>
    <scope>REVIEW</scope>
</reference>
<reference key="6">
    <citation type="journal article" date="1991" name="Proteins">
        <title>Comparative analysis of the sequences and structures of HIV-1 and HIV-2 proteases.</title>
        <authorList>
            <person name="Gustchina A."/>
            <person name="Weber I.T."/>
        </authorList>
    </citation>
    <scope>3D-STRUCTURE MODELING OF 514-612</scope>
</reference>
<reference key="7">
    <citation type="journal article" date="1993" name="Proc. Natl. Acad. Sci. U.S.A.">
        <title>Crystal structure of human immunodeficiency virus (HIV) type 2 protease in complex with a reduced amide inhibitor and comparison with HIV-1 protease structures.</title>
        <authorList>
            <person name="Tong L."/>
            <person name="Pav S."/>
            <person name="Pargellis C."/>
            <person name="Do F."/>
            <person name="Lamarre D."/>
            <person name="Anderson P.C."/>
        </authorList>
    </citation>
    <scope>X-RAY CRYSTALLOGRAPHY (2.2 ANGSTROMS) OF 514-612 IN COMPLEX WITH A REDUCED AMIDE INHIBITOR</scope>
</reference>
<reference key="8">
    <citation type="journal article" date="1993" name="J. Biol. Chem.">
        <title>The crystallographic structure of the protease from human immunodeficiency virus type 2 with two synthetic peptidic transition state analog inhibitors.</title>
        <authorList>
            <person name="Mulichak A.M."/>
            <person name="Hui J.O."/>
            <person name="Tomasselli A.G."/>
            <person name="Heinrikson R.L."/>
            <person name="Curry K.A."/>
            <person name="Tomich C.S."/>
            <person name="Thaisrivongs S."/>
            <person name="Sawyer T.K."/>
            <person name="Watenpaugh K.D."/>
        </authorList>
    </citation>
    <scope>X-RAY CRYSTALLOGRAPHY (2.5 ANGSTROMS) OF 514-612 IN COMPLEX WITH THE INHIBITORS U75875 AND U92163</scope>
</reference>
<reference key="9">
    <citation type="journal article" date="1994" name="J. Biol. Chem.">
        <title>Crystal structure at 1.9-A resolution of human immunodeficiency virus (HIV) II protease complexed with L-735,524, an orally bioavailable inhibitor of the HIV proteases.</title>
        <authorList>
            <person name="Chen Z."/>
            <person name="Li Y."/>
            <person name="Chen E."/>
            <person name="Hall D.L."/>
            <person name="Darke P.L."/>
            <person name="Culberson C."/>
            <person name="Shafer J.A."/>
            <person name="Kuo L.C."/>
        </authorList>
    </citation>
    <scope>X-RAY CRYSTALLOGRAPHY (1.9 ANGSTROMS) OF 514-612 IN COMPLEX WITH THE INHIBITOR L-736,524</scope>
</reference>
<reference key="10">
    <citation type="journal article" date="1995" name="Structure">
        <title>Comparative analysis of the X-ray structures of HIV-1 and HIV-2 proteases in complex with CGP 53820, a novel pseudosymmetric inhibitor.</title>
        <authorList>
            <person name="Priestle J.P."/>
            <person name="Fassler A."/>
            <person name="Rosel J."/>
            <person name="Tintelnot-Blomley M."/>
            <person name="Strop P."/>
            <person name="Gruetter M.G."/>
        </authorList>
    </citation>
    <scope>X-RAY CRYSTALLOGRAPHY (2.3 ANGSTROMS) OF 514-612 IN COMPLEX WITH THE INHIBITOR CGP 53820</scope>
</reference>
<reference key="11">
    <citation type="journal article" date="1995" name="Structure">
        <title>Crystal structures of HIV-2 protease in complex with inhibitors containing the hydroxyethylamine dipeptide isostere.</title>
        <authorList>
            <person name="Tong L."/>
            <person name="Pav S."/>
            <person name="Mui S."/>
            <person name="Lamarre D."/>
            <person name="Yoakim C."/>
            <person name="Beaulieu P.L."/>
            <person name="Anderson P.C."/>
        </authorList>
    </citation>
    <scope>X-RAY CRYSTALLOGRAPHY (1.7 ANGSTROMS) OF 514-612 IN COMPLEX WITH INHIBITORS</scope>
</reference>
<reference key="12">
    <citation type="journal article" date="1995" name="J. Med. Chem.">
        <title>Structure-based design of novel HIV protease inhibitors: carboxamide-containing 4-hydroxycoumarins and 4-hydroxy-2-pyrones as potent nonpeptidic inhibitors.</title>
        <authorList>
            <person name="Thaisrivongs S."/>
            <person name="Watenpaugh K.D."/>
            <person name="Howe W.J."/>
            <person name="Tomich P.K."/>
            <person name="Dolak L.A."/>
            <person name="Chong K.-T."/>
            <person name="Tomich C.C."/>
            <person name="Tomasselli A.G."/>
            <person name="Turner S.R."/>
            <person name="Strohbach J.W."/>
            <person name="Mulichak A.M."/>
            <person name="Janakiraman M.N."/>
            <person name="Moon J.B."/>
            <person name="Lynn J.C."/>
            <person name="Horng M.-M."/>
            <person name="Hinshaw R.R."/>
            <person name="Curry K.A."/>
            <person name="Rothrock D.J."/>
        </authorList>
    </citation>
    <scope>X-RAY CRYSTALLOGRAPHY (2.5 ANGSTROMS) OF 514-612 IN COMPLEX WITH THE INHIBITORS U096333 AND U097410</scope>
</reference>
<reference key="13">
    <citation type="journal article" date="1995" name="J. Med. Chem.">
        <title>Use of medium-sized cycloalkyl rings to enhance secondary binding: discovery of a new class of human immunodeficiency virus (HIV) protease inhibitors.</title>
        <authorList>
            <person name="Romines K.R."/>
            <person name="Watenpaugh K.D."/>
            <person name="Tomich P.K."/>
            <person name="Howe W.J."/>
            <person name="Morris J.K."/>
            <person name="Lovasz K.D."/>
            <person name="Mulichak A.M."/>
            <person name="Finzel B.C."/>
            <person name="Lynn J.C."/>
            <person name="Horng M.-M."/>
            <person name="Schwende F.J."/>
            <person name="Ruwart M.J."/>
            <person name="Zipp G.L."/>
            <person name="Chong K.-T."/>
            <person name="Dolak L.A."/>
            <person name="Toth L.N."/>
            <person name="Howard G.M."/>
            <person name="Rush B.D."/>
            <person name="Wilkinson K.F."/>
            <person name="Possert P.L."/>
            <person name="Dalga R.J."/>
            <person name="Hinshaw R.R."/>
        </authorList>
    </citation>
    <scope>X-RAY CRYSTALLOGRAPHY (2.3 ANGSTROMS) OF 514-612</scope>
</reference>
<reference key="14">
    <citation type="journal article" date="1997" name="J. Med. Chem.">
        <title>Potent HIV protease inhibitors containing a novel (hydroxyethyl)amide isostere.</title>
        <authorList>
            <person name="Beaulieu P.L."/>
            <person name="Wernic D."/>
            <person name="Abraham A."/>
            <person name="Anderson P.C."/>
            <person name="Bogri T."/>
            <person name="Bousquet Y."/>
            <person name="Croteau G."/>
            <person name="Guse I."/>
            <person name="Lamarre D."/>
            <person name="Liard F."/>
            <person name="Paris W."/>
            <person name="Thibeault D."/>
            <person name="Pav S."/>
            <person name="Tong L."/>
        </authorList>
    </citation>
    <scope>X-RAY CRYSTALLOGRAPHY (2.5 ANGSTROMS) OF 514-612 IN COMPLEX WITH (HYDROXYETHYL)AMIDE ISOSTERE CONTAINING INHIBITORS</scope>
</reference>
<reference key="15">
    <citation type="journal article" date="1997" name="Curr. Biol.">
        <title>The solution structure of the amino-terminal HHCC domain of HIV-2 integrase: a three-helix bundle stabilized by zinc.</title>
        <authorList>
            <person name="Eijkelenboom A.P.A.M."/>
            <person name="van den Ent F.M.I."/>
            <person name="Vos A."/>
            <person name="Doreleijers J.F."/>
            <person name="Hard K."/>
            <person name="Tullius T.D."/>
            <person name="Plasterk R.H.A."/>
            <person name="Kaptein R."/>
            <person name="Boelens R."/>
        </authorList>
    </citation>
    <scope>STRUCTURE BY NMR OF 1172-1226</scope>
</reference>
<reference key="16">
    <citation type="journal article" date="2002" name="Proc. Natl. Acad. Sci. U.S.A.">
        <title>Structure of HIV-2 reverse transcriptase at 2.35-A resolution and the mechanism of resistance to non-nucleoside inhibitors.</title>
        <authorList>
            <person name="Ren J.S."/>
            <person name="Bird L.E."/>
            <person name="Chamberlain P.P."/>
            <person name="Stewart-Jones G.B."/>
            <person name="Stuart D.I."/>
            <person name="Stammers D.K."/>
        </authorList>
    </citation>
    <scope>X-RAY CRYSTALLOGRAPHY (2.35 ANGSTROMS) OF 613-1167</scope>
</reference>
<organism>
    <name type="scientific">Human immunodeficiency virus type 2 subtype A (isolate ROD)</name>
    <name type="common">HIV-2</name>
    <dbReference type="NCBI Taxonomy" id="11720"/>
    <lineage>
        <taxon>Viruses</taxon>
        <taxon>Riboviria</taxon>
        <taxon>Pararnavirae</taxon>
        <taxon>Artverviricota</taxon>
        <taxon>Revtraviricetes</taxon>
        <taxon>Ortervirales</taxon>
        <taxon>Retroviridae</taxon>
        <taxon>Orthoretrovirinae</taxon>
        <taxon>Lentivirus</taxon>
        <taxon>Human immunodeficiency virus 2</taxon>
    </lineage>
</organism>
<keyword id="KW-0002">3D-structure</keyword>
<keyword id="KW-0014">AIDS</keyword>
<keyword id="KW-0064">Aspartyl protease</keyword>
<keyword id="KW-0167">Capsid protein</keyword>
<keyword id="KW-0229">DNA integration</keyword>
<keyword id="KW-0233">DNA recombination</keyword>
<keyword id="KW-0238">DNA-binding</keyword>
<keyword id="KW-0239">DNA-directed DNA polymerase</keyword>
<keyword id="KW-0255">Endonuclease</keyword>
<keyword id="KW-1262">Eukaryotic host gene expression shutoff by virus</keyword>
<keyword id="KW-1193">Eukaryotic host translation shutoff by virus</keyword>
<keyword id="KW-1032">Host cell membrane</keyword>
<keyword id="KW-1035">Host cytoplasm</keyword>
<keyword id="KW-1039">Host endosome</keyword>
<keyword id="KW-1190">Host gene expression shutoff by virus</keyword>
<keyword id="KW-1043">Host membrane</keyword>
<keyword id="KW-1048">Host nucleus</keyword>
<keyword id="KW-0945">Host-virus interaction</keyword>
<keyword id="KW-0378">Hydrolase</keyword>
<keyword id="KW-0446">Lipid-binding</keyword>
<keyword id="KW-0449">Lipoprotein</keyword>
<keyword id="KW-0460">Magnesium</keyword>
<keyword id="KW-0472">Membrane</keyword>
<keyword id="KW-0479">Metal-binding</keyword>
<keyword id="KW-0511">Multifunctional enzyme</keyword>
<keyword id="KW-0519">Myristate</keyword>
<keyword id="KW-0540">Nuclease</keyword>
<keyword id="KW-0548">Nucleotidyltransferase</keyword>
<keyword id="KW-0597">Phosphoprotein</keyword>
<keyword id="KW-0645">Protease</keyword>
<keyword id="KW-0677">Repeat</keyword>
<keyword id="KW-0688">Ribosomal frameshifting</keyword>
<keyword id="KW-0694">RNA-binding</keyword>
<keyword id="KW-0695">RNA-directed DNA polymerase</keyword>
<keyword id="KW-0808">Transferase</keyword>
<keyword id="KW-1179">Viral genome integration</keyword>
<keyword id="KW-0543">Viral nucleoprotein</keyword>
<keyword id="KW-1163">Viral penetration into host nucleus</keyword>
<keyword id="KW-1188">Viral release from host cell</keyword>
<keyword id="KW-0946">Virion</keyword>
<keyword id="KW-0917">Virion maturation</keyword>
<keyword id="KW-1160">Virus entry into host cell</keyword>
<keyword id="KW-0862">Zinc</keyword>
<keyword id="KW-0863">Zinc-finger</keyword>
<sequence>MGARNSVLRGKKADELERIRLRPGGKKKYRLKHIVWAANKLDRFGLAESLLESKEGCQKILTVLDPMVPTGSENLKSLFNTVCVIWCIHAEEKVKDTEGAKQIVRRHLVAETGTAEKMPSTSRPTAPSSEKGGNYPVQHVGGNYTHIPLSPRTLNAWVKLVEEKKFGAEVVPGFQALSEGCTPYDINQMLNCVGDHQAAMQIIREIINEEAAEWDVQHPIPGPLPAGQLREPRGSDIAGTTSTVEEQIQWMFRPQNPVPVGNIYRRWIQIGLQKCVRMYNPTNILDIKQGPKEPFQSYVDRFYKSLRAEQTDPAVKNWMTQTLLVQNANPDCKLVLKGLGMNPTLEEMLTACQGVGGPGQKARLMAEALKEVIGPAPIPFAAAQQRKAFKCWNCGKEGHSARQCRAPRRQGCWKCGKPGHIMTNCPDRQAGFLRTGPLGKEAPQLPRGPSSAGADTNSTPSGSSSGSTGEIYAAREKTERAERETIQGSDRGLTAPRAGGDTIQGATNRGLAAPQFSLWKRPVVTAYIEGQPVEVLLDTGADDSIVAGIELGNNYSPKIVGGIGGFINTKEYKNVEIEVLNKKVRATIMTGDTPINIFGRNILTALGMSLNLPVAKVEPIKIMLKPGKDGPKLRQWPLTKEKIEALKEICEKMEKEGQLEEAPPTNPYNTPTFAIKKKDKNKWRMLIDFRELNKVTQDFTEIQLGIPHPAGLAKKRRITVLDVGDAYFSIPLHEDFRPYTAFTLPSVNNAEPGKRYIYKVLPQGWKGSPAIFQHTMRQVLEPFRKANKDVIIIQYMDDILIASDRTDLEHDRVVLQLKELLNGLGFSTPDEKFQKDPPYHWMGYELWPTKWKLQKIQLPQKEIWTVNDIQKLVGVLNWAAQLYPGIKTKHLCRLIRGKMTLTEEVQWTELAEAELEENRIILSQEQEGHYYQEEKELEATVQKDQENQWTYKIHQEEKILKVGKYAKVKNTHTNGIRLLAQVVQKIGKEALVIWGRIPKFHLPVEREIWEQWWDNYWQVTWIPDWDFVSTPPLVRLAFNLVGDPIPGAETFYTDGSCNRQSKEGKAGYVTDRGKDKVKKLEQTTNQQAELEAFAMALTDSGPKVNIIVDSQYVMGISASQPTESESKIVNQIIEEMIKKEAIYVAWVPAHKGIGGNQEVDHLVSQGIRQVLFLEKIEPAQEEHEKYHSNVKELSHKFGIPNLVARQIVNSCAQCQQKGEAIHGQVNAELGTWQMDCTHLEGKIIIVAVHVASGFIEAEVIPQESGRQTALFLLKLASRWPITHLHTDNGANFTSQEVKMVAWWIGIEQSFGVPYNPQSQGVVEAMNHHLKNQISRIREQANTIETIVLMAIHCMNFKRRGGIGDMTPSERLINMITTEQEIQFLQAKNSKLKDFRVYFREGRDQLWKGPGELLWKGEGAVLVKVGTDIKIIPRRKAKIIRDYGGRQEMDSGSHLEGAREDGEMA</sequence>
<accession>P04584</accession>
<accession>Q76629</accession>
<comment type="function">
    <molecule>Gag-Pol polyprotein</molecule>
    <text evidence="1">Mediates, with Gag polyprotein, the essential events in virion assembly, including binding the plasma membrane, making the protein-protein interactions necessary to create spherical particles, recruiting the viral Env proteins, and packaging the genomic RNA via direct interactions with the RNA packaging sequence (Psi). Gag-Pol polyprotein may regulate its own translation, by the binding genomic RNA in the 5'-UTR. At low concentration, the polyprotein would promote translation, whereas at high concentration, the polyprotein would encapsidate genomic RNA and then shut off translation.</text>
</comment>
<comment type="function">
    <molecule>Matrix protein p17</molecule>
    <text evidence="8">Targets the polyprotein to the plasma membrane via a multipartite membrane-binding signal, that includes its myristoylated N-terminus. Matrix protein is part of the pre-integration complex. Implicated in the release from host cell mediated by Vpu. Binds to RNA.</text>
</comment>
<comment type="function">
    <molecule>Capsid protein p24</molecule>
    <text evidence="5 8">Forms the conical core that encapsulates the genomic RNA-nucleocapsid complex in the virion. Most core are conical, with only 7% tubular. The core is constituted by capsid protein hexamer subunits. The core is disassembled soon after virion entry (By similarity). Host restriction factors such as TRIM5-alpha or TRIMCyp bind retroviral capsids and cause premature capsid disassembly, leading to blocks in reverse transcription. Capsid restriction by TRIM5 is one of the factors which restricts HIV-1 to the human species. Host PIN1 apparently facilitates the virion uncoating. On the other hand, interactions with PDZD8 or CYPA stabilize the capsid.</text>
</comment>
<comment type="function">
    <molecule>Nucleocapsid protein p7</molecule>
    <text evidence="5">Encapsulates and protects viral dimeric unspliced genomic RNA (gRNA). Binds these RNAs through its zinc fingers. Acts as a nucleic acid chaperone which is involved in rearangement of nucleic acid secondary structure during gRNA retrotranscription. Also facilitates template switch leading to recombination. As part of the polyprotein, participates in gRNA dimerization, packaging, tRNA incorporation and virion assembly.</text>
</comment>
<comment type="function">
    <molecule>Protease</molecule>
    <text evidence="5 11">Aspartyl protease that mediates proteolytic cleavages of Gag and Gag-Pol polyproteins during or shortly after the release of the virion from the plasma membrane. Cleavages take place as an ordered, step-wise cascade to yield mature proteins. This process is called maturation. Displays maximal activity during the budding process just prior to particle release from the cell. Also cleaves Nef and Vif, probably concomitantly with viral structural proteins on maturation of virus particles. Hydrolyzes host EIF4GI and PABP1 in order to shut off the capped cellular mRNA translation. The resulting inhibition of cellular protein synthesis serves to ensure maximal viral gene expression and to evade host immune response (By similarity).</text>
</comment>
<comment type="function">
    <molecule>Reverse transcriptase/ribonuclease H</molecule>
    <text evidence="5">Multifunctional enzyme that converts the viral RNA genome into dsDNA in the cytoplasm, shortly after virus entry into the cell. This enzyme displays a DNA polymerase activity that can copy either DNA or RNA templates, and a ribonuclease H (RNase H) activity that cleaves the RNA strand of RNA-DNA heteroduplexes in a partially processive 3' to 5' endonucleasic mode. Conversion of viral genomic RNA into dsDNA requires many steps. A tRNA(3)-Lys binds to the primer-binding site (PBS) situated at the 5'-end of the viral RNA. RT uses the 3' end of the tRNA primer to perform a short round of RNA-dependent minus-strand DNA synthesis. The reading proceeds through the U5 region and ends after the repeated (R) region which is present at both ends of viral RNA. The portion of the RNA-DNA heteroduplex is digested by the RNase H, resulting in a ssDNA product attached to the tRNA primer. This ssDNA/tRNA hybridizes with the identical R region situated at the 3' end of viral RNA. This template exchange, known as minus-strand DNA strong stop transfer, can be either intra- or intermolecular. RT uses the 3' end of this newly synthesized short ssDNA to perform the RNA-dependent minus-strand DNA synthesis of the whole template. RNase H digests the RNA template except for two polypurine tracts (PPTs) situated at the 5'-end and near the center of the genome. It is not clear if both polymerase and RNase H activities are simultaneous. RNase H probably can proceed both in a polymerase-dependent (RNA cut into small fragments by the same RT performing DNA synthesis) and a polymerase-independent mode (cleavage of remaining RNA fragments by free RTs). Secondly, RT performs DNA-directed plus-strand DNA synthesis using the PPTs that have not been removed by RNase H as primers. PPTs and tRNA primers are then removed by RNase H. The 3' and 5' ssDNA PBS regions hybridize to form a circular dsDNA intermediate. Strand displacement synthesis by RT to the PBS and PPT ends produces a blunt ended, linear dsDNA copy of the viral genome that includes long terminal repeats (LTRs) at both ends.</text>
</comment>
<comment type="function">
    <molecule>Integrase</molecule>
    <text evidence="5">Catalyzes viral DNA integration into the host chromosome, by performing a series of DNA cutting and joining reactions. This enzyme activity takes place after virion entry into a cell and reverse transcription of the RNA genome in dsDNA. The first step in the integration process is 3' processing. This step requires a complex comprising the viral genome, matrix protein, Vpr and integrase. This complex is called the pre-integration complex (PIC). The integrase protein removes 2 nucleotides from each 3' end of the viral DNA, leaving recessed CA OH's at the 3' ends. In the second step, the PIC enters cell nucleus. This process is mediated through integrase and Vpr proteins, and allows the virus to infect a non dividing cell. This ability to enter the nucleus is specific of lentiviruses, other retroviruses cannot and rely on cell division to access cell chromosomes. In the third step, termed strand transfer, the integrase protein joins the previously processed 3' ends to the 5' ends of strands of target cellular DNA at the site of integration. The 5'-ends are produced by integrase-catalyzed staggered cuts, 5 bp apart. A Y-shaped, gapped, recombination intermediate results, with the 5'-ends of the viral DNA strands and the 3' ends of target DNA strands remaining unjoined, flanking a gap of 5 bp. The last step is viral DNA integration into host chromosome. This involves host DNA repair synthesis in which the 5 bp gaps between the unjoined strands are filled in and then ligated. Since this process occurs at both cuts flanking the HIV genome, a 5 bp duplication of host DNA is produced at the ends of HIV-1 integration. Alternatively, Integrase may catalyze the excision of viral DNA just after strand transfer, this is termed disintegration.</text>
</comment>
<comment type="catalytic activity">
    <reaction evidence="11">
        <text>Endopeptidase for which the P1 residue is preferably hydrophobic.</text>
        <dbReference type="EC" id="3.4.23.47"/>
    </reaction>
</comment>
<comment type="catalytic activity">
    <reaction evidence="1">
        <text>Endohydrolysis of RNA in RNA/DNA hybrids. Three different cleavage modes: 1. sequence-specific internal cleavage of RNA. Human immunodeficiency virus type 1 and Moloney murine leukemia virus enzymes prefer to cleave the RNA strand one nucleotide away from the RNA-DNA junction. 2. RNA 5'-end directed cleavage 13-19 nucleotides from the RNA end. 3. DNA 3'-end directed cleavage 15-20 nucleotides away from the primer terminus.</text>
        <dbReference type="EC" id="3.1.26.13"/>
    </reaction>
</comment>
<comment type="catalytic activity">
    <reaction evidence="1">
        <text>3'-end directed exonucleolytic cleavage of viral RNA-DNA hybrid.</text>
        <dbReference type="EC" id="3.1.13.2"/>
    </reaction>
</comment>
<comment type="catalytic activity">
    <reaction evidence="12">
        <text>DNA(n) + a 2'-deoxyribonucleoside 5'-triphosphate = DNA(n+1) + diphosphate</text>
        <dbReference type="Rhea" id="RHEA:22508"/>
        <dbReference type="Rhea" id="RHEA-COMP:17339"/>
        <dbReference type="Rhea" id="RHEA-COMP:17340"/>
        <dbReference type="ChEBI" id="CHEBI:33019"/>
        <dbReference type="ChEBI" id="CHEBI:61560"/>
        <dbReference type="ChEBI" id="CHEBI:173112"/>
        <dbReference type="EC" id="2.7.7.49"/>
    </reaction>
</comment>
<comment type="catalytic activity">
    <reaction evidence="12">
        <text>DNA(n) + a 2'-deoxyribonucleoside 5'-triphosphate = DNA(n+1) + diphosphate</text>
        <dbReference type="Rhea" id="RHEA:22508"/>
        <dbReference type="Rhea" id="RHEA-COMP:17339"/>
        <dbReference type="Rhea" id="RHEA-COMP:17340"/>
        <dbReference type="ChEBI" id="CHEBI:33019"/>
        <dbReference type="ChEBI" id="CHEBI:61560"/>
        <dbReference type="ChEBI" id="CHEBI:173112"/>
        <dbReference type="EC" id="2.7.7.7"/>
    </reaction>
</comment>
<comment type="cofactor">
    <cofactor evidence="1">
        <name>Mg(2+)</name>
        <dbReference type="ChEBI" id="CHEBI:18420"/>
    </cofactor>
    <text evidence="1">Binds 2 magnesium ions for reverse transcriptase polymerase activity.</text>
</comment>
<comment type="cofactor">
    <cofactor evidence="1">
        <name>Mg(2+)</name>
        <dbReference type="ChEBI" id="CHEBI:18420"/>
    </cofactor>
    <text evidence="1">Binds 2 magnesium ions for ribonuclease H (RNase H) activity. Substrate-binding is a precondition for magnesium binding.</text>
</comment>
<comment type="cofactor">
    <cofactor evidence="1">
        <name>Mg(2+)</name>
        <dbReference type="ChEBI" id="CHEBI:18420"/>
    </cofactor>
    <text evidence="1">Magnesium ions are required for integrase activity. Binds at least 1, maybe 2 magnesium ions.</text>
</comment>
<comment type="activity regulation">
    <text evidence="1">Protease: The viral protease is inhibited by many synthetic protease inhibitors (PIs), such as amprenavir, atazanavir, indinavir, loprinavir, nelfinavir, ritonavir and saquinavir. Use of protease inhibitors in tritherapy regimens permit more ambitious therapeutic strategies. Reverse transcriptase/ribonuclease H: RT can be inhibited either by nucleoside RT inhibitors (NRTIs) or by non nucleoside RT inhibitors (NNRTIs). NRTIs act as chain terminators, whereas NNRTIs inhibit DNA polymerization by binding a small hydrophobic pocket near the RT active site and inducing an allosteric change in this region. Classical NRTIs are abacavir, adefovir (PMEA), didanosine (ddI), lamivudine (3TC), stavudine (d4T), tenofovir (PMPA), zalcitabine (ddC), and zidovudine (AZT). Classical NNRTIs are atevirdine (BHAP U-87201E), delavirdine, efavirenz (DMP-266), emivirine (I-EBU), and nevirapine (BI-RG-587). The tritherapies used as a basic effective treatment of AIDS associate two NRTIs and one NNRTI.</text>
</comment>
<comment type="subunit">
    <molecule>Matrix protein p17</molecule>
    <text evidence="6 7">Homotrimer; further assembles as hexamers of trimers. Interacts with gp41 (via C-terminus). Interacts with host CALM1; this interaction induces a conformational change in the Matrix protein, triggering exposure of the myristate group. Interacts with host AP3D1; this interaction allows the polyprotein trafficking to multivesicular bodies during virus assembly. Part of the pre-integration complex (PIC) which is composed of viral genome, matrix protein, Vpr and integrase.</text>
</comment>
<comment type="subunit">
    <molecule>Capsid protein p24</molecule>
    <text evidence="2 6 7">Homodimer; the homodimer further multimerizes as homohexamers or homopentamers. Interacts with human PPIA/CYPA. Interacts with human NUP153. Interacts with host PDZD8; this interaction stabilizes the capsid. Interacts with monkey TRIM5; this interaction destabilizes the capsid.</text>
</comment>
<comment type="subunit">
    <molecule>Protease</molecule>
    <text evidence="5 8">Homodimer, whose active site consists of two apposed aspartic acid residues.</text>
</comment>
<comment type="subunit">
    <molecule>Reverse transcriptase/ribonuclease H</molecule>
    <text evidence="3">Heterodimer of p66 RT and p51 RT (RT p66/p51) (By similarity). Heterodimerization of RT is essential for DNA polymerase activity (By similarity). The overall folding of the subdomains is similar in p66 RT and p51 RT but the spatial arrangements of the subdomains are dramatically different (By similarity).</text>
</comment>
<comment type="subunit">
    <molecule>Integrase</molecule>
    <text evidence="4 5 8">Homotetramer; may further associate as a homohexadecamer (By similarity). Part of the pre-integration complex (PIC) which is composed of viral genome, matrix protein, Vpr and integrase. Interacts with human SMARCB1/INI1 and human PSIP1/LEDGF isoform 1. Interacts with human KPNA3; this interaction might play a role in nuclear import of the pre-integration complex (By similarity). Interacts with human NUP153; this interaction might play a role in nuclear import of the pre-integration complex (By similarity).</text>
</comment>
<comment type="subcellular location">
    <molecule>Gag-Pol polyprotein</molecule>
    <subcellularLocation>
        <location>Host cell membrane</location>
        <topology>Lipid-anchor</topology>
    </subcellularLocation>
    <subcellularLocation>
        <location>Host endosome</location>
        <location>Host multivesicular body</location>
    </subcellularLocation>
    <text evidence="8">These locations are linked to virus assembly sites. The main location is the cell membrane, but under some circumstances, late endosomal compartments can serve as productive sites for virion assembly.</text>
</comment>
<comment type="subcellular location">
    <molecule>Matrix protein p17</molecule>
    <subcellularLocation>
        <location>Virion membrane</location>
        <topology evidence="19">Lipid-anchor</topology>
    </subcellularLocation>
    <subcellularLocation>
        <location evidence="1">Host nucleus</location>
    </subcellularLocation>
    <subcellularLocation>
        <location evidence="1">Host cytoplasm</location>
    </subcellularLocation>
</comment>
<comment type="subcellular location">
    <molecule>Capsid protein p24</molecule>
    <subcellularLocation>
        <location evidence="19">Virion</location>
    </subcellularLocation>
</comment>
<comment type="subcellular location">
    <molecule>Nucleocapsid protein p7</molecule>
    <subcellularLocation>
        <location evidence="19">Virion</location>
    </subcellularLocation>
</comment>
<comment type="subcellular location">
    <molecule>Reverse transcriptase/ribonuclease H</molecule>
    <subcellularLocation>
        <location evidence="19">Virion</location>
    </subcellularLocation>
</comment>
<comment type="subcellular location">
    <molecule>Integrase</molecule>
    <subcellularLocation>
        <location evidence="19">Virion</location>
    </subcellularLocation>
    <subcellularLocation>
        <location evidence="19">Host nucleus</location>
    </subcellularLocation>
    <subcellularLocation>
        <location evidence="19">Host cytoplasm</location>
    </subcellularLocation>
    <text evidence="19">Nuclear at initial phase, cytoplasmic at assembly.</text>
</comment>
<comment type="alternative products">
    <event type="ribosomal frameshifting"/>
    <isoform>
        <id>P04584-1</id>
        <name>Gag-Pol polyprotein</name>
        <sequence type="displayed"/>
    </isoform>
    <isoform>
        <id>P04590-1</id>
        <name>Gag polyprotein</name>
        <sequence type="external"/>
    </isoform>
    <text>Translation results in the formation of the Gag polyprotein most of the time. Ribosomal frameshifting at the gag-pol genes boundary occurs at low frequency and produces the Gag-Pol polyprotein. This strategy of translation probably allows the virus to modulate the quantity of each viral protein. Maintenance of a correct Gag to Gag-Pol ratio is essential for RNA dimerization and viral infectivity.</text>
</comment>
<comment type="domain">
    <molecule>Reverse transcriptase/ribonuclease H</molecule>
    <text evidence="1">RT is structured in five subdomains: finger, palm, thumb, connection and RNase H. Within the palm subdomain, the 'primer grip' region is thought to be involved in the positioning of the primer terminus for accommodating the incoming nucleotide. The RNase H domain stabilizes the association of RT with primer-template.</text>
</comment>
<comment type="domain">
    <molecule>Reverse transcriptase/ribonuclease H</molecule>
    <text evidence="1">The tryptophan repeat motif is involved in RT p66/p51 dimerization (By similarity).</text>
</comment>
<comment type="domain">
    <molecule>Integrase</molecule>
    <text evidence="1">The core domain contains the D-x(n)-D-x(35)-E motif, named for the phylogenetically conserved glutamic acid and aspartic acid residues and the invariant 35 amino acid spacing between the second and third acidic residues. Each acidic residue of the D,D(35)E motif is independently essential for the 3'-processing and strand transfer activities of purified integrase protein.</text>
</comment>
<comment type="PTM">
    <molecule>Gag-Pol polyprotein</molecule>
    <text evidence="5 12">Specific enzymatic cleavages by the viral protease yield mature proteins. The protease is released by autocatalytic cleavage. The polyprotein is cleaved during and after budding, this process is termed maturation. Proteolytic cleavage of p66 RT removes the RNase H domain to yield the p51 RT subunit. Nucleocapsid protein p7 might be further cleaved after virus entry.</text>
</comment>
<comment type="miscellaneous">
    <molecule>Reverse transcriptase/ribonuclease H</molecule>
    <text evidence="1">Error-prone enzyme that lacks a proof-reading function. High mutations rate is a direct consequence of this characteristic. RT also displays frequent template switching leading to high recombination rate. Recombination mostly occurs between homologous regions of the two copackaged RNA genomes. If these two RNA molecules derive from different viral strains, reverse transcription will give rise to highly recombinated proviral DNAs.</text>
</comment>
<comment type="miscellaneous">
    <molecule>Isoform Gag-Pol polyprotein</molecule>
    <text>Produced by -1 ribosomal frameshifting.</text>
</comment>
<proteinExistence type="evidence at protein level"/>
<name>POL_HV2RO</name>
<gene>
    <name type="primary">gag-pol</name>
</gene>